<reference key="1">
    <citation type="journal article" date="2009" name="Proc. Natl. Acad. Sci. U.S.A.">
        <title>Biogeography of the Sulfolobus islandicus pan-genome.</title>
        <authorList>
            <person name="Reno M.L."/>
            <person name="Held N.L."/>
            <person name="Fields C.J."/>
            <person name="Burke P.V."/>
            <person name="Whitaker R.J."/>
        </authorList>
    </citation>
    <scope>NUCLEOTIDE SEQUENCE [LARGE SCALE GENOMIC DNA]</scope>
    <source>
        <strain>M.16.4 / Kamchatka #3</strain>
    </source>
</reference>
<feature type="chain" id="PRO_1000203149" description="Histidine--tRNA ligase">
    <location>
        <begin position="1"/>
        <end position="426"/>
    </location>
</feature>
<protein>
    <recommendedName>
        <fullName evidence="1">Histidine--tRNA ligase</fullName>
        <ecNumber evidence="1">6.1.1.21</ecNumber>
    </recommendedName>
    <alternativeName>
        <fullName evidence="1">Histidyl-tRNA synthetase</fullName>
        <shortName evidence="1">HisRS</shortName>
    </alternativeName>
</protein>
<organism>
    <name type="scientific">Saccharolobus islandicus (strain M.16.4 / Kamchatka #3)</name>
    <name type="common">Sulfolobus islandicus</name>
    <dbReference type="NCBI Taxonomy" id="426118"/>
    <lineage>
        <taxon>Archaea</taxon>
        <taxon>Thermoproteota</taxon>
        <taxon>Thermoprotei</taxon>
        <taxon>Sulfolobales</taxon>
        <taxon>Sulfolobaceae</taxon>
        <taxon>Saccharolobus</taxon>
    </lineage>
</organism>
<evidence type="ECO:0000255" key="1">
    <source>
        <dbReference type="HAMAP-Rule" id="MF_00127"/>
    </source>
</evidence>
<gene>
    <name evidence="1" type="primary">hisS</name>
    <name type="ordered locus">M164_1870</name>
</gene>
<sequence>MTKFETVRGMKDYIGIDAEKIRYLESTFRDLAIKYGYSEIITPVVEEFKLFALKGGEELRETMYVFKDKADRELSLRPEITPSVARAYIQNLQSSPKPIRLFYFGTVYRYDEPQYGRYREFRQAGIEMIGDSSILADLEVLDLLYNFYDKLNLSNDITIKINNIGIFRKIMDKYNIEDNLQEHILHLIDKNKINEALDILEKNLKNKDIIDFFNKILTKKDTKLEDIESLAELEEVSRLDIKSEFLYLFRLSRILSNLNIKFKIDLGFVRGLAYYTGLIFEVLHPSVQFSIAGGGRYDKLIELYGGLPSPAIGFAIGVERTLLVIKDLKVEEPVNVIVIGMSEDTIPSMFMVSRILRKEEYKVVINTKDQPLSKLLPYYASQGFKVAIIIGKQELEKNMITVRNLITRKQISVPLENIEDAIKQTL</sequence>
<dbReference type="EC" id="6.1.1.21" evidence="1"/>
<dbReference type="EMBL" id="CP001402">
    <property type="protein sequence ID" value="ACR42473.1"/>
    <property type="molecule type" value="Genomic_DNA"/>
</dbReference>
<dbReference type="RefSeq" id="WP_012711827.1">
    <property type="nucleotide sequence ID" value="NC_012726.1"/>
</dbReference>
<dbReference type="SMR" id="C4KIQ9"/>
<dbReference type="GeneID" id="84053416"/>
<dbReference type="KEGG" id="sid:M164_1870"/>
<dbReference type="HOGENOM" id="CLU_025113_3_1_2"/>
<dbReference type="Proteomes" id="UP000001479">
    <property type="component" value="Chromosome"/>
</dbReference>
<dbReference type="GO" id="GO:0005737">
    <property type="term" value="C:cytoplasm"/>
    <property type="evidence" value="ECO:0007669"/>
    <property type="project" value="UniProtKB-SubCell"/>
</dbReference>
<dbReference type="GO" id="GO:0005524">
    <property type="term" value="F:ATP binding"/>
    <property type="evidence" value="ECO:0007669"/>
    <property type="project" value="UniProtKB-UniRule"/>
</dbReference>
<dbReference type="GO" id="GO:0004821">
    <property type="term" value="F:histidine-tRNA ligase activity"/>
    <property type="evidence" value="ECO:0007669"/>
    <property type="project" value="UniProtKB-UniRule"/>
</dbReference>
<dbReference type="GO" id="GO:0006427">
    <property type="term" value="P:histidyl-tRNA aminoacylation"/>
    <property type="evidence" value="ECO:0007669"/>
    <property type="project" value="UniProtKB-UniRule"/>
</dbReference>
<dbReference type="GO" id="GO:0000105">
    <property type="term" value="P:L-histidine biosynthetic process"/>
    <property type="evidence" value="ECO:0007669"/>
    <property type="project" value="InterPro"/>
</dbReference>
<dbReference type="CDD" id="cd00773">
    <property type="entry name" value="HisRS-like_core"/>
    <property type="match status" value="1"/>
</dbReference>
<dbReference type="FunFam" id="3.30.930.10:FF:000121">
    <property type="entry name" value="Histidine--tRNA ligase"/>
    <property type="match status" value="1"/>
</dbReference>
<dbReference type="Gene3D" id="3.40.50.800">
    <property type="entry name" value="Anticodon-binding domain"/>
    <property type="match status" value="1"/>
</dbReference>
<dbReference type="Gene3D" id="3.30.930.10">
    <property type="entry name" value="Bira Bifunctional Protein, Domain 2"/>
    <property type="match status" value="1"/>
</dbReference>
<dbReference type="HAMAP" id="MF_00127">
    <property type="entry name" value="His_tRNA_synth"/>
    <property type="match status" value="1"/>
</dbReference>
<dbReference type="HAMAP" id="MF_00125">
    <property type="entry name" value="HisZ"/>
    <property type="match status" value="1"/>
</dbReference>
<dbReference type="InterPro" id="IPR006195">
    <property type="entry name" value="aa-tRNA-synth_II"/>
</dbReference>
<dbReference type="InterPro" id="IPR045864">
    <property type="entry name" value="aa-tRNA-synth_II/BPL/LPL"/>
</dbReference>
<dbReference type="InterPro" id="IPR004154">
    <property type="entry name" value="Anticodon-bd"/>
</dbReference>
<dbReference type="InterPro" id="IPR036621">
    <property type="entry name" value="Anticodon-bd_dom_sf"/>
</dbReference>
<dbReference type="InterPro" id="IPR015807">
    <property type="entry name" value="His-tRNA-ligase"/>
</dbReference>
<dbReference type="InterPro" id="IPR041715">
    <property type="entry name" value="HisRS-like_core"/>
</dbReference>
<dbReference type="InterPro" id="IPR004516">
    <property type="entry name" value="HisRS/HisZ"/>
</dbReference>
<dbReference type="InterPro" id="IPR004517">
    <property type="entry name" value="HisZ"/>
</dbReference>
<dbReference type="NCBIfam" id="TIGR00442">
    <property type="entry name" value="hisS"/>
    <property type="match status" value="1"/>
</dbReference>
<dbReference type="PANTHER" id="PTHR43707:SF1">
    <property type="entry name" value="HISTIDINE--TRNA LIGASE, MITOCHONDRIAL-RELATED"/>
    <property type="match status" value="1"/>
</dbReference>
<dbReference type="PANTHER" id="PTHR43707">
    <property type="entry name" value="HISTIDYL-TRNA SYNTHETASE"/>
    <property type="match status" value="1"/>
</dbReference>
<dbReference type="Pfam" id="PF03129">
    <property type="entry name" value="HGTP_anticodon"/>
    <property type="match status" value="1"/>
</dbReference>
<dbReference type="Pfam" id="PF13393">
    <property type="entry name" value="tRNA-synt_His"/>
    <property type="match status" value="1"/>
</dbReference>
<dbReference type="PIRSF" id="PIRSF001549">
    <property type="entry name" value="His-tRNA_synth"/>
    <property type="match status" value="1"/>
</dbReference>
<dbReference type="SUPFAM" id="SSF52954">
    <property type="entry name" value="Class II aaRS ABD-related"/>
    <property type="match status" value="1"/>
</dbReference>
<dbReference type="SUPFAM" id="SSF55681">
    <property type="entry name" value="Class II aaRS and biotin synthetases"/>
    <property type="match status" value="1"/>
</dbReference>
<dbReference type="PROSITE" id="PS50862">
    <property type="entry name" value="AA_TRNA_LIGASE_II"/>
    <property type="match status" value="1"/>
</dbReference>
<keyword id="KW-0030">Aminoacyl-tRNA synthetase</keyword>
<keyword id="KW-0067">ATP-binding</keyword>
<keyword id="KW-0963">Cytoplasm</keyword>
<keyword id="KW-0436">Ligase</keyword>
<keyword id="KW-0547">Nucleotide-binding</keyword>
<keyword id="KW-0648">Protein biosynthesis</keyword>
<accession>C4KIQ9</accession>
<proteinExistence type="inferred from homology"/>
<comment type="catalytic activity">
    <reaction evidence="1">
        <text>tRNA(His) + L-histidine + ATP = L-histidyl-tRNA(His) + AMP + diphosphate + H(+)</text>
        <dbReference type="Rhea" id="RHEA:17313"/>
        <dbReference type="Rhea" id="RHEA-COMP:9665"/>
        <dbReference type="Rhea" id="RHEA-COMP:9689"/>
        <dbReference type="ChEBI" id="CHEBI:15378"/>
        <dbReference type="ChEBI" id="CHEBI:30616"/>
        <dbReference type="ChEBI" id="CHEBI:33019"/>
        <dbReference type="ChEBI" id="CHEBI:57595"/>
        <dbReference type="ChEBI" id="CHEBI:78442"/>
        <dbReference type="ChEBI" id="CHEBI:78527"/>
        <dbReference type="ChEBI" id="CHEBI:456215"/>
        <dbReference type="EC" id="6.1.1.21"/>
    </reaction>
</comment>
<comment type="subcellular location">
    <subcellularLocation>
        <location evidence="1">Cytoplasm</location>
    </subcellularLocation>
</comment>
<comment type="similarity">
    <text evidence="1">Belongs to the class-II aminoacyl-tRNA synthetase family.</text>
</comment>
<name>SYH_SACI6</name>